<evidence type="ECO:0000255" key="1"/>
<evidence type="ECO:0000256" key="2">
    <source>
        <dbReference type="SAM" id="MobiDB-lite"/>
    </source>
</evidence>
<evidence type="ECO:0000305" key="3"/>
<evidence type="ECO:0000312" key="4">
    <source>
        <dbReference type="HGNC" id="HGNC:53438"/>
    </source>
</evidence>
<proteinExistence type="inferred from homology"/>
<protein>
    <recommendedName>
        <fullName evidence="3">Coiled-coil domain-containing protein 194</fullName>
    </recommendedName>
</protein>
<organism>
    <name type="scientific">Homo sapiens</name>
    <name type="common">Human</name>
    <dbReference type="NCBI Taxonomy" id="9606"/>
    <lineage>
        <taxon>Eukaryota</taxon>
        <taxon>Metazoa</taxon>
        <taxon>Chordata</taxon>
        <taxon>Craniata</taxon>
        <taxon>Vertebrata</taxon>
        <taxon>Euteleostomi</taxon>
        <taxon>Mammalia</taxon>
        <taxon>Eutheria</taxon>
        <taxon>Euarchontoglires</taxon>
        <taxon>Primates</taxon>
        <taxon>Haplorrhini</taxon>
        <taxon>Catarrhini</taxon>
        <taxon>Hominidae</taxon>
        <taxon>Homo</taxon>
    </lineage>
</organism>
<gene>
    <name evidence="4" type="primary">CCDC194</name>
</gene>
<sequence length="234" mass="24954">MAEPGPEPGRAWRVLALCGVAVFLAAAAAGGALVAWNLAASAARGPRCPEPGANATAPPGDPPPGVDDLRRRLAEAAEREEALARQLDQAESIRHELEKALKACEGRQSRLQTQLTTLKIEMDEAKAQGTQMGAENGALTEALARWEAAATESTRRLDEALRRAGVAEAEGEACAAREAALRERLNVLEAEMSPQRRVPRPRPRSGSRPRPSPRSRSRSGPSGGCRRPARRARG</sequence>
<dbReference type="EMBL" id="AC010319">
    <property type="status" value="NOT_ANNOTATED_CDS"/>
    <property type="molecule type" value="Genomic_DNA"/>
</dbReference>
<dbReference type="CCDS" id="CCDS92556.1"/>
<dbReference type="RefSeq" id="NP_001382151.1">
    <property type="nucleotide sequence ID" value="NM_001395222.1"/>
</dbReference>
<dbReference type="SMR" id="A0A1B0GVG4"/>
<dbReference type="FunCoup" id="A0A1B0GVG4">
    <property type="interactions" value="1"/>
</dbReference>
<dbReference type="MetOSite" id="A0A1B0GVG4"/>
<dbReference type="BioMuta" id="CCDC194"/>
<dbReference type="MassIVE" id="A0A1B0GVG4"/>
<dbReference type="PeptideAtlas" id="A0A1B0GVG4"/>
<dbReference type="Ensembl" id="ENST00000636079.2">
    <property type="protein sequence ID" value="ENSP00000490504.1"/>
    <property type="gene ID" value="ENSG00000269720.3"/>
</dbReference>
<dbReference type="GeneID" id="110806280"/>
<dbReference type="MANE-Select" id="ENST00000636079.2">
    <property type="protein sequence ID" value="ENSP00000490504.1"/>
    <property type="RefSeq nucleotide sequence ID" value="NM_001395222.1"/>
    <property type="RefSeq protein sequence ID" value="NP_001382151.1"/>
</dbReference>
<dbReference type="AGR" id="HGNC:53438"/>
<dbReference type="GeneCards" id="CCDC194"/>
<dbReference type="HGNC" id="HGNC:53438">
    <property type="gene designation" value="CCDC194"/>
</dbReference>
<dbReference type="HPA" id="ENSG00000269720">
    <property type="expression patterns" value="Tissue enhanced (ovary)"/>
</dbReference>
<dbReference type="neXtProt" id="NX_A0A1B0GVG4"/>
<dbReference type="OpenTargets" id="ENSG00000269720"/>
<dbReference type="VEuPathDB" id="HostDB:ENSG00000269720"/>
<dbReference type="GeneTree" id="ENSGT00850000133633"/>
<dbReference type="InParanoid" id="A0A1B0GVG4"/>
<dbReference type="OMA" id="TQMGVEN"/>
<dbReference type="OrthoDB" id="9751369at2759"/>
<dbReference type="PAN-GO" id="A0A1B0GVG4">
    <property type="GO annotations" value="0 GO annotations based on evolutionary models"/>
</dbReference>
<dbReference type="Pharos" id="A0A1B0GVG4">
    <property type="development level" value="Tdark"/>
</dbReference>
<dbReference type="PRO" id="PR:A0A1B0GVG4"/>
<dbReference type="Proteomes" id="UP000005640">
    <property type="component" value="Chromosome 19"/>
</dbReference>
<dbReference type="RNAct" id="A0A1B0GVG4">
    <property type="molecule type" value="protein"/>
</dbReference>
<dbReference type="Bgee" id="ENSG00000269720">
    <property type="expression patterns" value="Expressed in left ovary and 85 other cell types or tissues"/>
</dbReference>
<feature type="signal peptide" evidence="1">
    <location>
        <begin position="1"/>
        <end position="42"/>
    </location>
</feature>
<feature type="chain" id="PRO_0000441407" description="Coiled-coil domain-containing protein 194" evidence="1">
    <location>
        <begin position="43"/>
        <end position="234"/>
    </location>
</feature>
<feature type="region of interest" description="Disordered" evidence="2">
    <location>
        <begin position="44"/>
        <end position="67"/>
    </location>
</feature>
<feature type="region of interest" description="Disordered" evidence="2">
    <location>
        <begin position="187"/>
        <end position="234"/>
    </location>
</feature>
<feature type="coiled-coil region" evidence="1">
    <location>
        <begin position="66"/>
        <end position="163"/>
    </location>
</feature>
<feature type="compositionally biased region" description="Low complexity" evidence="2">
    <location>
        <begin position="187"/>
        <end position="196"/>
    </location>
</feature>
<feature type="compositionally biased region" description="Basic residues" evidence="2">
    <location>
        <begin position="197"/>
        <end position="217"/>
    </location>
</feature>
<keyword id="KW-0175">Coiled coil</keyword>
<keyword id="KW-1185">Reference proteome</keyword>
<keyword id="KW-0732">Signal</keyword>
<reference key="1">
    <citation type="journal article" date="2004" name="Nature">
        <title>The DNA sequence and biology of human chromosome 19.</title>
        <authorList>
            <person name="Grimwood J."/>
            <person name="Gordon L.A."/>
            <person name="Olsen A.S."/>
            <person name="Terry A."/>
            <person name="Schmutz J."/>
            <person name="Lamerdin J.E."/>
            <person name="Hellsten U."/>
            <person name="Goodstein D."/>
            <person name="Couronne O."/>
            <person name="Tran-Gyamfi M."/>
            <person name="Aerts A."/>
            <person name="Altherr M."/>
            <person name="Ashworth L."/>
            <person name="Bajorek E."/>
            <person name="Black S."/>
            <person name="Branscomb E."/>
            <person name="Caenepeel S."/>
            <person name="Carrano A.V."/>
            <person name="Caoile C."/>
            <person name="Chan Y.M."/>
            <person name="Christensen M."/>
            <person name="Cleland C.A."/>
            <person name="Copeland A."/>
            <person name="Dalin E."/>
            <person name="Dehal P."/>
            <person name="Denys M."/>
            <person name="Detter J.C."/>
            <person name="Escobar J."/>
            <person name="Flowers D."/>
            <person name="Fotopulos D."/>
            <person name="Garcia C."/>
            <person name="Georgescu A.M."/>
            <person name="Glavina T."/>
            <person name="Gomez M."/>
            <person name="Gonzales E."/>
            <person name="Groza M."/>
            <person name="Hammon N."/>
            <person name="Hawkins T."/>
            <person name="Haydu L."/>
            <person name="Ho I."/>
            <person name="Huang W."/>
            <person name="Israni S."/>
            <person name="Jett J."/>
            <person name="Kadner K."/>
            <person name="Kimball H."/>
            <person name="Kobayashi A."/>
            <person name="Larionov V."/>
            <person name="Leem S.-H."/>
            <person name="Lopez F."/>
            <person name="Lou Y."/>
            <person name="Lowry S."/>
            <person name="Malfatti S."/>
            <person name="Martinez D."/>
            <person name="McCready P.M."/>
            <person name="Medina C."/>
            <person name="Morgan J."/>
            <person name="Nelson K."/>
            <person name="Nolan M."/>
            <person name="Ovcharenko I."/>
            <person name="Pitluck S."/>
            <person name="Pollard M."/>
            <person name="Popkie A.P."/>
            <person name="Predki P."/>
            <person name="Quan G."/>
            <person name="Ramirez L."/>
            <person name="Rash S."/>
            <person name="Retterer J."/>
            <person name="Rodriguez A."/>
            <person name="Rogers S."/>
            <person name="Salamov A."/>
            <person name="Salazar A."/>
            <person name="She X."/>
            <person name="Smith D."/>
            <person name="Slezak T."/>
            <person name="Solovyev V."/>
            <person name="Thayer N."/>
            <person name="Tice H."/>
            <person name="Tsai M."/>
            <person name="Ustaszewska A."/>
            <person name="Vo N."/>
            <person name="Wagner M."/>
            <person name="Wheeler J."/>
            <person name="Wu K."/>
            <person name="Xie G."/>
            <person name="Yang J."/>
            <person name="Dubchak I."/>
            <person name="Furey T.S."/>
            <person name="DeJong P."/>
            <person name="Dickson M."/>
            <person name="Gordon D."/>
            <person name="Eichler E.E."/>
            <person name="Pennacchio L.A."/>
            <person name="Richardson P."/>
            <person name="Stubbs L."/>
            <person name="Rokhsar D.S."/>
            <person name="Myers R.M."/>
            <person name="Rubin E.M."/>
            <person name="Lucas S.M."/>
        </authorList>
    </citation>
    <scope>NUCLEOTIDE SEQUENCE [LARGE SCALE GENOMIC DNA]</scope>
</reference>
<name>CC194_HUMAN</name>
<accession>A0A1B0GVG4</accession>